<reference key="1">
    <citation type="journal article" date="2005" name="Proc. Natl. Acad. Sci. U.S.A.">
        <title>The complete genome sequence of Mycobacterium avium subspecies paratuberculosis.</title>
        <authorList>
            <person name="Li L."/>
            <person name="Bannantine J.P."/>
            <person name="Zhang Q."/>
            <person name="Amonsin A."/>
            <person name="May B.J."/>
            <person name="Alt D."/>
            <person name="Banerji N."/>
            <person name="Kanjilal S."/>
            <person name="Kapur V."/>
        </authorList>
    </citation>
    <scope>NUCLEOTIDE SEQUENCE [LARGE SCALE GENOMIC DNA]</scope>
    <source>
        <strain>ATCC BAA-968 / K-10</strain>
    </source>
</reference>
<evidence type="ECO:0000250" key="1"/>
<evidence type="ECO:0000255" key="2">
    <source>
        <dbReference type="HAMAP-Rule" id="MF_01109"/>
    </source>
</evidence>
<name>OTC_MYCPA</name>
<sequence length="309" mass="33595">MTPRHFLRDDDLSPAEQAEVLALAAELKKDPFSARPLEGPRGVAVLFDKNSTRTRFSFEVGIAQLGGHAVVVDARSTQLGRDETLEDTARVLSRYVEAIVWRTFEQQRLEAMAGAATVPVINALSDEFHPCQMLADLQAIAEHKGSLSGLRMCYLGDGANNMAHSLMLGGVTAGIHVTIAAPDGFTPAPEFVAAARRRAESTGATVTLTTDARAAARGVDVLVTDTWTSMGQEDDGLDRRTPFWPYQLNADLVSLADPEAIVLHCLPAHRGEEITDEVMDGPSSVVWDEAENRLHAQKALLTWLLERQS</sequence>
<gene>
    <name evidence="2" type="primary">argF</name>
    <name type="ordered locus">MAP_1365</name>
</gene>
<accession>Q740I5</accession>
<organism>
    <name type="scientific">Mycolicibacterium paratuberculosis (strain ATCC BAA-968 / K-10)</name>
    <name type="common">Mycobacterium paratuberculosis</name>
    <dbReference type="NCBI Taxonomy" id="262316"/>
    <lineage>
        <taxon>Bacteria</taxon>
        <taxon>Bacillati</taxon>
        <taxon>Actinomycetota</taxon>
        <taxon>Actinomycetes</taxon>
        <taxon>Mycobacteriales</taxon>
        <taxon>Mycobacteriaceae</taxon>
        <taxon>Mycobacterium</taxon>
        <taxon>Mycobacterium avium complex (MAC)</taxon>
    </lineage>
</organism>
<keyword id="KW-0028">Amino-acid biosynthesis</keyword>
<keyword id="KW-0055">Arginine biosynthesis</keyword>
<keyword id="KW-0963">Cytoplasm</keyword>
<keyword id="KW-1185">Reference proteome</keyword>
<keyword id="KW-0808">Transferase</keyword>
<protein>
    <recommendedName>
        <fullName evidence="2">Ornithine carbamoyltransferase</fullName>
        <shortName evidence="2">OTCase</shortName>
        <ecNumber evidence="2">2.1.3.3</ecNumber>
    </recommendedName>
</protein>
<comment type="function">
    <text evidence="1">Reversibly catalyzes the transfer of the carbamoyl group from carbamoyl phosphate (CP) to the N(epsilon) atom of ornithine (ORN) to produce L-citrulline.</text>
</comment>
<comment type="catalytic activity">
    <reaction evidence="2">
        <text>carbamoyl phosphate + L-ornithine = L-citrulline + phosphate + H(+)</text>
        <dbReference type="Rhea" id="RHEA:19513"/>
        <dbReference type="ChEBI" id="CHEBI:15378"/>
        <dbReference type="ChEBI" id="CHEBI:43474"/>
        <dbReference type="ChEBI" id="CHEBI:46911"/>
        <dbReference type="ChEBI" id="CHEBI:57743"/>
        <dbReference type="ChEBI" id="CHEBI:58228"/>
        <dbReference type="EC" id="2.1.3.3"/>
    </reaction>
</comment>
<comment type="pathway">
    <text evidence="2">Amino-acid biosynthesis; L-arginine biosynthesis; L-arginine from L-ornithine and carbamoyl phosphate: step 1/3.</text>
</comment>
<comment type="subcellular location">
    <subcellularLocation>
        <location evidence="2">Cytoplasm</location>
    </subcellularLocation>
</comment>
<comment type="similarity">
    <text evidence="2">Belongs to the aspartate/ornithine carbamoyltransferase superfamily. OTCase family.</text>
</comment>
<dbReference type="EC" id="2.1.3.3" evidence="2"/>
<dbReference type="EMBL" id="AE016958">
    <property type="protein sequence ID" value="AAS03682.1"/>
    <property type="molecule type" value="Genomic_DNA"/>
</dbReference>
<dbReference type="RefSeq" id="WP_003877772.1">
    <property type="nucleotide sequence ID" value="NZ_CP106873.1"/>
</dbReference>
<dbReference type="SMR" id="Q740I5"/>
<dbReference type="STRING" id="262316.MAP_1365"/>
<dbReference type="KEGG" id="mpa:MAP_1365"/>
<dbReference type="PATRIC" id="fig|262316.17.peg.1439"/>
<dbReference type="eggNOG" id="COG0078">
    <property type="taxonomic scope" value="Bacteria"/>
</dbReference>
<dbReference type="HOGENOM" id="CLU_043846_3_2_11"/>
<dbReference type="UniPathway" id="UPA00068">
    <property type="reaction ID" value="UER00112"/>
</dbReference>
<dbReference type="Proteomes" id="UP000000580">
    <property type="component" value="Chromosome"/>
</dbReference>
<dbReference type="GO" id="GO:0005737">
    <property type="term" value="C:cytoplasm"/>
    <property type="evidence" value="ECO:0007669"/>
    <property type="project" value="UniProtKB-SubCell"/>
</dbReference>
<dbReference type="GO" id="GO:0016597">
    <property type="term" value="F:amino acid binding"/>
    <property type="evidence" value="ECO:0007669"/>
    <property type="project" value="InterPro"/>
</dbReference>
<dbReference type="GO" id="GO:0004585">
    <property type="term" value="F:ornithine carbamoyltransferase activity"/>
    <property type="evidence" value="ECO:0007669"/>
    <property type="project" value="UniProtKB-UniRule"/>
</dbReference>
<dbReference type="GO" id="GO:0042450">
    <property type="term" value="P:arginine biosynthetic process via ornithine"/>
    <property type="evidence" value="ECO:0007669"/>
    <property type="project" value="TreeGrafter"/>
</dbReference>
<dbReference type="GO" id="GO:0019240">
    <property type="term" value="P:citrulline biosynthetic process"/>
    <property type="evidence" value="ECO:0007669"/>
    <property type="project" value="TreeGrafter"/>
</dbReference>
<dbReference type="GO" id="GO:0006526">
    <property type="term" value="P:L-arginine biosynthetic process"/>
    <property type="evidence" value="ECO:0007669"/>
    <property type="project" value="UniProtKB-UniRule"/>
</dbReference>
<dbReference type="FunFam" id="3.40.50.1370:FF:000008">
    <property type="entry name" value="Ornithine carbamoyltransferase"/>
    <property type="match status" value="1"/>
</dbReference>
<dbReference type="Gene3D" id="3.40.50.1370">
    <property type="entry name" value="Aspartate/ornithine carbamoyltransferase"/>
    <property type="match status" value="2"/>
</dbReference>
<dbReference type="HAMAP" id="MF_01109">
    <property type="entry name" value="OTCase"/>
    <property type="match status" value="1"/>
</dbReference>
<dbReference type="InterPro" id="IPR006132">
    <property type="entry name" value="Asp/Orn_carbamoyltranf_P-bd"/>
</dbReference>
<dbReference type="InterPro" id="IPR006130">
    <property type="entry name" value="Asp/Orn_carbamoylTrfase"/>
</dbReference>
<dbReference type="InterPro" id="IPR036901">
    <property type="entry name" value="Asp/Orn_carbamoylTrfase_sf"/>
</dbReference>
<dbReference type="InterPro" id="IPR006131">
    <property type="entry name" value="Asp_carbamoyltransf_Asp/Orn-bd"/>
</dbReference>
<dbReference type="InterPro" id="IPR002292">
    <property type="entry name" value="Orn/put_carbamltrans"/>
</dbReference>
<dbReference type="InterPro" id="IPR024904">
    <property type="entry name" value="OTCase_ArgI"/>
</dbReference>
<dbReference type="NCBIfam" id="TIGR00658">
    <property type="entry name" value="orni_carb_tr"/>
    <property type="match status" value="1"/>
</dbReference>
<dbReference type="NCBIfam" id="NF001986">
    <property type="entry name" value="PRK00779.1"/>
    <property type="match status" value="1"/>
</dbReference>
<dbReference type="PANTHER" id="PTHR45753">
    <property type="entry name" value="ORNITHINE CARBAMOYLTRANSFERASE, MITOCHONDRIAL"/>
    <property type="match status" value="1"/>
</dbReference>
<dbReference type="PANTHER" id="PTHR45753:SF3">
    <property type="entry name" value="ORNITHINE TRANSCARBAMYLASE, MITOCHONDRIAL"/>
    <property type="match status" value="1"/>
</dbReference>
<dbReference type="Pfam" id="PF00185">
    <property type="entry name" value="OTCace"/>
    <property type="match status" value="1"/>
</dbReference>
<dbReference type="Pfam" id="PF02729">
    <property type="entry name" value="OTCace_N"/>
    <property type="match status" value="1"/>
</dbReference>
<dbReference type="PRINTS" id="PR00100">
    <property type="entry name" value="AOTCASE"/>
</dbReference>
<dbReference type="PRINTS" id="PR00102">
    <property type="entry name" value="OTCASE"/>
</dbReference>
<dbReference type="SUPFAM" id="SSF53671">
    <property type="entry name" value="Aspartate/ornithine carbamoyltransferase"/>
    <property type="match status" value="1"/>
</dbReference>
<dbReference type="PROSITE" id="PS00097">
    <property type="entry name" value="CARBAMOYLTRANSFERASE"/>
    <property type="match status" value="1"/>
</dbReference>
<feature type="chain" id="PRO_0000112952" description="Ornithine carbamoyltransferase">
    <location>
        <begin position="1"/>
        <end position="309"/>
    </location>
</feature>
<feature type="binding site" evidence="2">
    <location>
        <begin position="51"/>
        <end position="54"/>
    </location>
    <ligand>
        <name>carbamoyl phosphate</name>
        <dbReference type="ChEBI" id="CHEBI:58228"/>
    </ligand>
</feature>
<feature type="binding site" evidence="2">
    <location>
        <position position="78"/>
    </location>
    <ligand>
        <name>carbamoyl phosphate</name>
        <dbReference type="ChEBI" id="CHEBI:58228"/>
    </ligand>
</feature>
<feature type="binding site" evidence="2">
    <location>
        <position position="102"/>
    </location>
    <ligand>
        <name>carbamoyl phosphate</name>
        <dbReference type="ChEBI" id="CHEBI:58228"/>
    </ligand>
</feature>
<feature type="binding site" evidence="2">
    <location>
        <begin position="129"/>
        <end position="132"/>
    </location>
    <ligand>
        <name>carbamoyl phosphate</name>
        <dbReference type="ChEBI" id="CHEBI:58228"/>
    </ligand>
</feature>
<feature type="binding site" evidence="2">
    <location>
        <position position="161"/>
    </location>
    <ligand>
        <name>L-ornithine</name>
        <dbReference type="ChEBI" id="CHEBI:46911"/>
    </ligand>
</feature>
<feature type="binding site" evidence="2">
    <location>
        <position position="225"/>
    </location>
    <ligand>
        <name>L-ornithine</name>
        <dbReference type="ChEBI" id="CHEBI:46911"/>
    </ligand>
</feature>
<feature type="binding site" evidence="2">
    <location>
        <begin position="229"/>
        <end position="230"/>
    </location>
    <ligand>
        <name>L-ornithine</name>
        <dbReference type="ChEBI" id="CHEBI:46911"/>
    </ligand>
</feature>
<feature type="binding site" evidence="2">
    <location>
        <begin position="265"/>
        <end position="266"/>
    </location>
    <ligand>
        <name>carbamoyl phosphate</name>
        <dbReference type="ChEBI" id="CHEBI:58228"/>
    </ligand>
</feature>
<feature type="binding site" evidence="2">
    <location>
        <position position="293"/>
    </location>
    <ligand>
        <name>carbamoyl phosphate</name>
        <dbReference type="ChEBI" id="CHEBI:58228"/>
    </ligand>
</feature>
<proteinExistence type="inferred from homology"/>